<organism>
    <name type="scientific">Methylococcus capsulatus (strain ATCC 33009 / NCIMB 11132 / Bath)</name>
    <dbReference type="NCBI Taxonomy" id="243233"/>
    <lineage>
        <taxon>Bacteria</taxon>
        <taxon>Pseudomonadati</taxon>
        <taxon>Pseudomonadota</taxon>
        <taxon>Gammaproteobacteria</taxon>
        <taxon>Methylococcales</taxon>
        <taxon>Methylococcaceae</taxon>
        <taxon>Methylococcus</taxon>
    </lineage>
</organism>
<evidence type="ECO:0000255" key="1">
    <source>
        <dbReference type="HAMAP-Rule" id="MF_00211"/>
    </source>
</evidence>
<sequence length="341" mass="35585">MEIPEVLETLLAGKDLSPSAMRETMRKIMSGGATPAQIGAFLIALRCKGETVEEVAAAAQVLREMATKVPVSAPHLLDTCGTGGDASKTFNISTTAAFVVAAAGGRVAKHGSRSVSGRSGSADVLEAAGINIELTPDQVKTCIETLGVGFLFAQRHHGAMKYAIGPRRELGVRTLFNLLGPLTNPAGAPNQLVGVYTDPWVEGLARVLQQLGSSHVLVVHAEDGLDEISIAAPTHVAELKNGLITNYYVRPEQFGFRRAALSELAIDTVAASLKMMRGVLDNVPGPARDIVALNAGAAIYAADLTDSLEAGIRRAEAVIADGSARAKLEALAALSRQFAAS</sequence>
<comment type="function">
    <text evidence="1">Catalyzes the transfer of the phosphoribosyl group of 5-phosphorylribose-1-pyrophosphate (PRPP) to anthranilate to yield N-(5'-phosphoribosyl)-anthranilate (PRA).</text>
</comment>
<comment type="catalytic activity">
    <reaction evidence="1">
        <text>N-(5-phospho-beta-D-ribosyl)anthranilate + diphosphate = 5-phospho-alpha-D-ribose 1-diphosphate + anthranilate</text>
        <dbReference type="Rhea" id="RHEA:11768"/>
        <dbReference type="ChEBI" id="CHEBI:16567"/>
        <dbReference type="ChEBI" id="CHEBI:18277"/>
        <dbReference type="ChEBI" id="CHEBI:33019"/>
        <dbReference type="ChEBI" id="CHEBI:58017"/>
        <dbReference type="EC" id="2.4.2.18"/>
    </reaction>
</comment>
<comment type="cofactor">
    <cofactor evidence="1">
        <name>Mg(2+)</name>
        <dbReference type="ChEBI" id="CHEBI:18420"/>
    </cofactor>
    <text evidence="1">Binds 2 magnesium ions per monomer.</text>
</comment>
<comment type="pathway">
    <text evidence="1">Amino-acid biosynthesis; L-tryptophan biosynthesis; L-tryptophan from chorismate: step 2/5.</text>
</comment>
<comment type="subunit">
    <text evidence="1">Homodimer.</text>
</comment>
<comment type="similarity">
    <text evidence="1">Belongs to the anthranilate phosphoribosyltransferase family.</text>
</comment>
<reference key="1">
    <citation type="journal article" date="2004" name="PLoS Biol.">
        <title>Genomic insights into methanotrophy: the complete genome sequence of Methylococcus capsulatus (Bath).</title>
        <authorList>
            <person name="Ward N.L."/>
            <person name="Larsen O."/>
            <person name="Sakwa J."/>
            <person name="Bruseth L."/>
            <person name="Khouri H.M."/>
            <person name="Durkin A.S."/>
            <person name="Dimitrov G."/>
            <person name="Jiang L."/>
            <person name="Scanlan D."/>
            <person name="Kang K.H."/>
            <person name="Lewis M.R."/>
            <person name="Nelson K.E."/>
            <person name="Methe B.A."/>
            <person name="Wu M."/>
            <person name="Heidelberg J.F."/>
            <person name="Paulsen I.T."/>
            <person name="Fouts D.E."/>
            <person name="Ravel J."/>
            <person name="Tettelin H."/>
            <person name="Ren Q."/>
            <person name="Read T.D."/>
            <person name="DeBoy R.T."/>
            <person name="Seshadri R."/>
            <person name="Salzberg S.L."/>
            <person name="Jensen H.B."/>
            <person name="Birkeland N.K."/>
            <person name="Nelson W.C."/>
            <person name="Dodson R.J."/>
            <person name="Grindhaug S.H."/>
            <person name="Holt I.E."/>
            <person name="Eidhammer I."/>
            <person name="Jonasen I."/>
            <person name="Vanaken S."/>
            <person name="Utterback T.R."/>
            <person name="Feldblyum T.V."/>
            <person name="Fraser C.M."/>
            <person name="Lillehaug J.R."/>
            <person name="Eisen J.A."/>
        </authorList>
    </citation>
    <scope>NUCLEOTIDE SEQUENCE [LARGE SCALE GENOMIC DNA]</scope>
    <source>
        <strain>ATCC 33009 / NCIMB 11132 / Bath</strain>
    </source>
</reference>
<dbReference type="EC" id="2.4.2.18" evidence="1"/>
<dbReference type="EMBL" id="AE017282">
    <property type="protein sequence ID" value="AAU91317.1"/>
    <property type="molecule type" value="Genomic_DNA"/>
</dbReference>
<dbReference type="RefSeq" id="WP_010961801.1">
    <property type="nucleotide sequence ID" value="NC_002977.6"/>
</dbReference>
<dbReference type="SMR" id="Q604F8"/>
<dbReference type="STRING" id="243233.MCA2586"/>
<dbReference type="GeneID" id="88224771"/>
<dbReference type="KEGG" id="mca:MCA2586"/>
<dbReference type="eggNOG" id="COG0547">
    <property type="taxonomic scope" value="Bacteria"/>
</dbReference>
<dbReference type="HOGENOM" id="CLU_034315_2_1_6"/>
<dbReference type="UniPathway" id="UPA00035">
    <property type="reaction ID" value="UER00041"/>
</dbReference>
<dbReference type="Proteomes" id="UP000006821">
    <property type="component" value="Chromosome"/>
</dbReference>
<dbReference type="GO" id="GO:0005829">
    <property type="term" value="C:cytosol"/>
    <property type="evidence" value="ECO:0007669"/>
    <property type="project" value="TreeGrafter"/>
</dbReference>
<dbReference type="GO" id="GO:0004048">
    <property type="term" value="F:anthranilate phosphoribosyltransferase activity"/>
    <property type="evidence" value="ECO:0007669"/>
    <property type="project" value="UniProtKB-UniRule"/>
</dbReference>
<dbReference type="GO" id="GO:0000287">
    <property type="term" value="F:magnesium ion binding"/>
    <property type="evidence" value="ECO:0007669"/>
    <property type="project" value="UniProtKB-UniRule"/>
</dbReference>
<dbReference type="GO" id="GO:0000162">
    <property type="term" value="P:L-tryptophan biosynthetic process"/>
    <property type="evidence" value="ECO:0007669"/>
    <property type="project" value="UniProtKB-UniRule"/>
</dbReference>
<dbReference type="FunFam" id="3.40.1030.10:FF:000002">
    <property type="entry name" value="Anthranilate phosphoribosyltransferase"/>
    <property type="match status" value="1"/>
</dbReference>
<dbReference type="Gene3D" id="3.40.1030.10">
    <property type="entry name" value="Nucleoside phosphorylase/phosphoribosyltransferase catalytic domain"/>
    <property type="match status" value="1"/>
</dbReference>
<dbReference type="Gene3D" id="1.20.970.10">
    <property type="entry name" value="Transferase, Pyrimidine Nucleoside Phosphorylase, Chain C"/>
    <property type="match status" value="1"/>
</dbReference>
<dbReference type="HAMAP" id="MF_00211">
    <property type="entry name" value="TrpD"/>
    <property type="match status" value="1"/>
</dbReference>
<dbReference type="InterPro" id="IPR005940">
    <property type="entry name" value="Anthranilate_Pribosyl_Tfrase"/>
</dbReference>
<dbReference type="InterPro" id="IPR000312">
    <property type="entry name" value="Glycosyl_Trfase_fam3"/>
</dbReference>
<dbReference type="InterPro" id="IPR017459">
    <property type="entry name" value="Glycosyl_Trfase_fam3_N_dom"/>
</dbReference>
<dbReference type="InterPro" id="IPR036320">
    <property type="entry name" value="Glycosyl_Trfase_fam3_N_dom_sf"/>
</dbReference>
<dbReference type="InterPro" id="IPR035902">
    <property type="entry name" value="Nuc_phospho_transferase"/>
</dbReference>
<dbReference type="NCBIfam" id="TIGR01245">
    <property type="entry name" value="trpD"/>
    <property type="match status" value="1"/>
</dbReference>
<dbReference type="PANTHER" id="PTHR43285">
    <property type="entry name" value="ANTHRANILATE PHOSPHORIBOSYLTRANSFERASE"/>
    <property type="match status" value="1"/>
</dbReference>
<dbReference type="PANTHER" id="PTHR43285:SF2">
    <property type="entry name" value="ANTHRANILATE PHOSPHORIBOSYLTRANSFERASE"/>
    <property type="match status" value="1"/>
</dbReference>
<dbReference type="Pfam" id="PF02885">
    <property type="entry name" value="Glycos_trans_3N"/>
    <property type="match status" value="1"/>
</dbReference>
<dbReference type="Pfam" id="PF00591">
    <property type="entry name" value="Glycos_transf_3"/>
    <property type="match status" value="1"/>
</dbReference>
<dbReference type="SUPFAM" id="SSF52418">
    <property type="entry name" value="Nucleoside phosphorylase/phosphoribosyltransferase catalytic domain"/>
    <property type="match status" value="1"/>
</dbReference>
<dbReference type="SUPFAM" id="SSF47648">
    <property type="entry name" value="Nucleoside phosphorylase/phosphoribosyltransferase N-terminal domain"/>
    <property type="match status" value="1"/>
</dbReference>
<name>TRPD_METCA</name>
<gene>
    <name evidence="1" type="primary">trpD</name>
    <name type="ordered locus">MCA2586</name>
</gene>
<proteinExistence type="inferred from homology"/>
<accession>Q604F8</accession>
<keyword id="KW-0028">Amino-acid biosynthesis</keyword>
<keyword id="KW-0057">Aromatic amino acid biosynthesis</keyword>
<keyword id="KW-0328">Glycosyltransferase</keyword>
<keyword id="KW-0460">Magnesium</keyword>
<keyword id="KW-0479">Metal-binding</keyword>
<keyword id="KW-1185">Reference proteome</keyword>
<keyword id="KW-0808">Transferase</keyword>
<keyword id="KW-0822">Tryptophan biosynthesis</keyword>
<feature type="chain" id="PRO_0000227168" description="Anthranilate phosphoribosyltransferase">
    <location>
        <begin position="1"/>
        <end position="341"/>
    </location>
</feature>
<feature type="binding site" evidence="1">
    <location>
        <position position="81"/>
    </location>
    <ligand>
        <name>5-phospho-alpha-D-ribose 1-diphosphate</name>
        <dbReference type="ChEBI" id="CHEBI:58017"/>
    </ligand>
</feature>
<feature type="binding site" evidence="1">
    <location>
        <position position="81"/>
    </location>
    <ligand>
        <name>anthranilate</name>
        <dbReference type="ChEBI" id="CHEBI:16567"/>
        <label>1</label>
    </ligand>
</feature>
<feature type="binding site" evidence="1">
    <location>
        <begin position="84"/>
        <end position="85"/>
    </location>
    <ligand>
        <name>5-phospho-alpha-D-ribose 1-diphosphate</name>
        <dbReference type="ChEBI" id="CHEBI:58017"/>
    </ligand>
</feature>
<feature type="binding site" evidence="1">
    <location>
        <position position="89"/>
    </location>
    <ligand>
        <name>5-phospho-alpha-D-ribose 1-diphosphate</name>
        <dbReference type="ChEBI" id="CHEBI:58017"/>
    </ligand>
</feature>
<feature type="binding site" evidence="1">
    <location>
        <begin position="91"/>
        <end position="94"/>
    </location>
    <ligand>
        <name>5-phospho-alpha-D-ribose 1-diphosphate</name>
        <dbReference type="ChEBI" id="CHEBI:58017"/>
    </ligand>
</feature>
<feature type="binding site" evidence="1">
    <location>
        <position position="93"/>
    </location>
    <ligand>
        <name>Mg(2+)</name>
        <dbReference type="ChEBI" id="CHEBI:18420"/>
        <label>1</label>
    </ligand>
</feature>
<feature type="binding site" evidence="1">
    <location>
        <begin position="109"/>
        <end position="117"/>
    </location>
    <ligand>
        <name>5-phospho-alpha-D-ribose 1-diphosphate</name>
        <dbReference type="ChEBI" id="CHEBI:58017"/>
    </ligand>
</feature>
<feature type="binding site" evidence="1">
    <location>
        <position position="121"/>
    </location>
    <ligand>
        <name>5-phospho-alpha-D-ribose 1-diphosphate</name>
        <dbReference type="ChEBI" id="CHEBI:58017"/>
    </ligand>
</feature>
<feature type="binding site" evidence="1">
    <location>
        <position position="167"/>
    </location>
    <ligand>
        <name>anthranilate</name>
        <dbReference type="ChEBI" id="CHEBI:16567"/>
        <label>2</label>
    </ligand>
</feature>
<feature type="binding site" evidence="1">
    <location>
        <position position="226"/>
    </location>
    <ligand>
        <name>Mg(2+)</name>
        <dbReference type="ChEBI" id="CHEBI:18420"/>
        <label>2</label>
    </ligand>
</feature>
<feature type="binding site" evidence="1">
    <location>
        <position position="227"/>
    </location>
    <ligand>
        <name>Mg(2+)</name>
        <dbReference type="ChEBI" id="CHEBI:18420"/>
        <label>1</label>
    </ligand>
</feature>
<feature type="binding site" evidence="1">
    <location>
        <position position="227"/>
    </location>
    <ligand>
        <name>Mg(2+)</name>
        <dbReference type="ChEBI" id="CHEBI:18420"/>
        <label>2</label>
    </ligand>
</feature>
<protein>
    <recommendedName>
        <fullName evidence="1">Anthranilate phosphoribosyltransferase</fullName>
        <ecNumber evidence="1">2.4.2.18</ecNumber>
    </recommendedName>
</protein>